<dbReference type="EC" id="4.1.1.65" evidence="1"/>
<dbReference type="EMBL" id="CU928163">
    <property type="protein sequence ID" value="CAR15809.1"/>
    <property type="molecule type" value="Genomic_DNA"/>
</dbReference>
<dbReference type="RefSeq" id="YP_002415293.1">
    <property type="nucleotide sequence ID" value="NC_011751.1"/>
</dbReference>
<dbReference type="SMR" id="B7NG97"/>
<dbReference type="STRING" id="585056.ECUMN_4694"/>
<dbReference type="KEGG" id="eum:ECUMN_4694"/>
<dbReference type="PATRIC" id="fig|585056.7.peg.4859"/>
<dbReference type="HOGENOM" id="CLU_029061_4_1_6"/>
<dbReference type="UniPathway" id="UPA00558">
    <property type="reaction ID" value="UER00616"/>
</dbReference>
<dbReference type="Proteomes" id="UP000007097">
    <property type="component" value="Chromosome"/>
</dbReference>
<dbReference type="GO" id="GO:0005886">
    <property type="term" value="C:plasma membrane"/>
    <property type="evidence" value="ECO:0007669"/>
    <property type="project" value="UniProtKB-SubCell"/>
</dbReference>
<dbReference type="GO" id="GO:0004609">
    <property type="term" value="F:phosphatidylserine decarboxylase activity"/>
    <property type="evidence" value="ECO:0007669"/>
    <property type="project" value="UniProtKB-UniRule"/>
</dbReference>
<dbReference type="GO" id="GO:0006646">
    <property type="term" value="P:phosphatidylethanolamine biosynthetic process"/>
    <property type="evidence" value="ECO:0007669"/>
    <property type="project" value="UniProtKB-UniRule"/>
</dbReference>
<dbReference type="HAMAP" id="MF_00662">
    <property type="entry name" value="PS_decarb_PSD_B_type1"/>
    <property type="match status" value="1"/>
</dbReference>
<dbReference type="InterPro" id="IPR003817">
    <property type="entry name" value="PS_Dcarbxylase"/>
</dbReference>
<dbReference type="InterPro" id="IPR033177">
    <property type="entry name" value="PSD-B"/>
</dbReference>
<dbReference type="InterPro" id="IPR033178">
    <property type="entry name" value="PSD_type1_pro"/>
</dbReference>
<dbReference type="NCBIfam" id="TIGR00163">
    <property type="entry name" value="PS_decarb"/>
    <property type="match status" value="1"/>
</dbReference>
<dbReference type="PANTHER" id="PTHR10067">
    <property type="entry name" value="PHOSPHATIDYLSERINE DECARBOXYLASE"/>
    <property type="match status" value="1"/>
</dbReference>
<dbReference type="PANTHER" id="PTHR10067:SF6">
    <property type="entry name" value="PHOSPHATIDYLSERINE DECARBOXYLASE PROENZYME, MITOCHONDRIAL"/>
    <property type="match status" value="1"/>
</dbReference>
<dbReference type="Pfam" id="PF02666">
    <property type="entry name" value="PS_Dcarbxylase"/>
    <property type="match status" value="1"/>
</dbReference>
<evidence type="ECO:0000255" key="1">
    <source>
        <dbReference type="HAMAP-Rule" id="MF_00662"/>
    </source>
</evidence>
<evidence type="ECO:0000256" key="2">
    <source>
        <dbReference type="SAM" id="MobiDB-lite"/>
    </source>
</evidence>
<gene>
    <name evidence="1" type="primary">psd</name>
    <name type="ordered locus">ECUMN_4694</name>
</gene>
<feature type="chain" id="PRO_1000131368" description="Phosphatidylserine decarboxylase beta chain" evidence="1">
    <location>
        <begin position="1"/>
        <end position="253"/>
    </location>
</feature>
<feature type="chain" id="PRO_1000131369" description="Phosphatidylserine decarboxylase alpha chain" evidence="1">
    <location>
        <begin position="254"/>
        <end position="322"/>
    </location>
</feature>
<feature type="region of interest" description="Disordered" evidence="2">
    <location>
        <begin position="293"/>
        <end position="322"/>
    </location>
</feature>
<feature type="compositionally biased region" description="Basic and acidic residues" evidence="2">
    <location>
        <begin position="308"/>
        <end position="322"/>
    </location>
</feature>
<feature type="active site" description="Charge relay system; for autoendoproteolytic cleavage activity" evidence="1">
    <location>
        <position position="90"/>
    </location>
</feature>
<feature type="active site" description="Charge relay system; for autoendoproteolytic cleavage activity" evidence="1">
    <location>
        <position position="147"/>
    </location>
</feature>
<feature type="active site" description="Charge relay system; for autoendoproteolytic cleavage activity" evidence="1">
    <location>
        <position position="254"/>
    </location>
</feature>
<feature type="active site" description="Schiff-base intermediate with substrate; via pyruvic acid; for decarboxylase activity" evidence="1">
    <location>
        <position position="254"/>
    </location>
</feature>
<feature type="site" description="Cleavage (non-hydrolytic); by autocatalysis" evidence="1">
    <location>
        <begin position="253"/>
        <end position="254"/>
    </location>
</feature>
<feature type="modified residue" description="Pyruvic acid (Ser); by autocatalysis" evidence="1">
    <location>
        <position position="254"/>
    </location>
</feature>
<comment type="function">
    <text evidence="1">Catalyzes the formation of phosphatidylethanolamine (PtdEtn) from phosphatidylserine (PtdSer).</text>
</comment>
<comment type="catalytic activity">
    <reaction evidence="1">
        <text>a 1,2-diacyl-sn-glycero-3-phospho-L-serine + H(+) = a 1,2-diacyl-sn-glycero-3-phosphoethanolamine + CO2</text>
        <dbReference type="Rhea" id="RHEA:20828"/>
        <dbReference type="ChEBI" id="CHEBI:15378"/>
        <dbReference type="ChEBI" id="CHEBI:16526"/>
        <dbReference type="ChEBI" id="CHEBI:57262"/>
        <dbReference type="ChEBI" id="CHEBI:64612"/>
        <dbReference type="EC" id="4.1.1.65"/>
    </reaction>
</comment>
<comment type="cofactor">
    <cofactor evidence="1">
        <name>pyruvate</name>
        <dbReference type="ChEBI" id="CHEBI:15361"/>
    </cofactor>
    <text evidence="1">Binds 1 pyruvoyl group covalently per subunit.</text>
</comment>
<comment type="pathway">
    <text evidence="1">Phospholipid metabolism; phosphatidylethanolamine biosynthesis; phosphatidylethanolamine from CDP-diacylglycerol: step 2/2.</text>
</comment>
<comment type="subunit">
    <text evidence="1">Heterodimer of a large membrane-associated beta subunit and a small pyruvoyl-containing alpha subunit.</text>
</comment>
<comment type="subcellular location">
    <subcellularLocation>
        <location evidence="1">Cell membrane</location>
        <topology evidence="1">Peripheral membrane protein</topology>
    </subcellularLocation>
</comment>
<comment type="PTM">
    <text evidence="1">Is synthesized initially as an inactive proenzyme. Formation of the active enzyme involves a self-maturation process in which the active site pyruvoyl group is generated from an internal serine residue via an autocatalytic post-translational modification. Two non-identical subunits are generated from the proenzyme in this reaction, and the pyruvate is formed at the N-terminus of the alpha chain, which is derived from the carboxyl end of the proenzyme. The autoendoproteolytic cleavage occurs by a canonical serine protease mechanism, in which the side chain hydroxyl group of the serine supplies its oxygen atom to form the C-terminus of the beta chain, while the remainder of the serine residue undergoes an oxidative deamination to produce ammonia and the pyruvoyl prosthetic group on the alpha chain. During this reaction, the Ser that is part of the protease active site of the proenzyme becomes the pyruvoyl prosthetic group, which constitutes an essential element of the active site of the mature decarboxylase.</text>
</comment>
<comment type="similarity">
    <text evidence="1">Belongs to the phosphatidylserine decarboxylase family. PSD-B subfamily. Prokaryotic type I sub-subfamily.</text>
</comment>
<keyword id="KW-1003">Cell membrane</keyword>
<keyword id="KW-0210">Decarboxylase</keyword>
<keyword id="KW-0444">Lipid biosynthesis</keyword>
<keyword id="KW-0443">Lipid metabolism</keyword>
<keyword id="KW-0456">Lyase</keyword>
<keyword id="KW-0472">Membrane</keyword>
<keyword id="KW-0594">Phospholipid biosynthesis</keyword>
<keyword id="KW-1208">Phospholipid metabolism</keyword>
<keyword id="KW-0670">Pyruvate</keyword>
<keyword id="KW-0865">Zymogen</keyword>
<proteinExistence type="inferred from homology"/>
<name>PSD_ECOLU</name>
<protein>
    <recommendedName>
        <fullName evidence="1">Phosphatidylserine decarboxylase proenzyme</fullName>
        <ecNumber evidence="1">4.1.1.65</ecNumber>
    </recommendedName>
    <component>
        <recommendedName>
            <fullName evidence="1">Phosphatidylserine decarboxylase alpha chain</fullName>
        </recommendedName>
    </component>
    <component>
        <recommendedName>
            <fullName evidence="1">Phosphatidylserine decarboxylase beta chain</fullName>
        </recommendedName>
    </component>
</protein>
<reference key="1">
    <citation type="journal article" date="2009" name="PLoS Genet.">
        <title>Organised genome dynamics in the Escherichia coli species results in highly diverse adaptive paths.</title>
        <authorList>
            <person name="Touchon M."/>
            <person name="Hoede C."/>
            <person name="Tenaillon O."/>
            <person name="Barbe V."/>
            <person name="Baeriswyl S."/>
            <person name="Bidet P."/>
            <person name="Bingen E."/>
            <person name="Bonacorsi S."/>
            <person name="Bouchier C."/>
            <person name="Bouvet O."/>
            <person name="Calteau A."/>
            <person name="Chiapello H."/>
            <person name="Clermont O."/>
            <person name="Cruveiller S."/>
            <person name="Danchin A."/>
            <person name="Diard M."/>
            <person name="Dossat C."/>
            <person name="Karoui M.E."/>
            <person name="Frapy E."/>
            <person name="Garry L."/>
            <person name="Ghigo J.M."/>
            <person name="Gilles A.M."/>
            <person name="Johnson J."/>
            <person name="Le Bouguenec C."/>
            <person name="Lescat M."/>
            <person name="Mangenot S."/>
            <person name="Martinez-Jehanne V."/>
            <person name="Matic I."/>
            <person name="Nassif X."/>
            <person name="Oztas S."/>
            <person name="Petit M.A."/>
            <person name="Pichon C."/>
            <person name="Rouy Z."/>
            <person name="Ruf C.S."/>
            <person name="Schneider D."/>
            <person name="Tourret J."/>
            <person name="Vacherie B."/>
            <person name="Vallenet D."/>
            <person name="Medigue C."/>
            <person name="Rocha E.P.C."/>
            <person name="Denamur E."/>
        </authorList>
    </citation>
    <scope>NUCLEOTIDE SEQUENCE [LARGE SCALE GENOMIC DNA]</scope>
    <source>
        <strain>UMN026 / ExPEC</strain>
    </source>
</reference>
<accession>B7NG97</accession>
<organism>
    <name type="scientific">Escherichia coli O17:K52:H18 (strain UMN026 / ExPEC)</name>
    <dbReference type="NCBI Taxonomy" id="585056"/>
    <lineage>
        <taxon>Bacteria</taxon>
        <taxon>Pseudomonadati</taxon>
        <taxon>Pseudomonadota</taxon>
        <taxon>Gammaproteobacteria</taxon>
        <taxon>Enterobacterales</taxon>
        <taxon>Enterobacteriaceae</taxon>
        <taxon>Escherichia</taxon>
    </lineage>
</organism>
<sequence length="322" mass="35934">MLNSFKLSLQYILPKLWLTRLAGWGASKRAGWLTKLVIDLFVKYYKVDMKEAQKPDTASYRTFNEFFVRPLRDEVRPIDTDPNVLVMPADGVISQLGKIEEDKILQAKGHNYSLEALLAGNYLMADLFRNGTFVTTYLSPRDYHRVHMPCNGILREMIYVPGDLFSVNHLTAQNVPNLFARNERVICLFDTEFGPMAQILVGATIVGSIETVWAGTITPPREGIIKRWTWPAGENDGSVALLKGQEMGRFKLGSTVINLFAPGKVNLVEQLESLSVTKIGQPLAVSTETFVTPDAEPAPLPAEEIEAEHDASPLVDDKKDQV</sequence>